<organism>
    <name type="scientific">Limosilactobacillus fermentum (strain NBRC 3956 / LMG 18251)</name>
    <name type="common">Lactobacillus fermentum</name>
    <dbReference type="NCBI Taxonomy" id="334390"/>
    <lineage>
        <taxon>Bacteria</taxon>
        <taxon>Bacillati</taxon>
        <taxon>Bacillota</taxon>
        <taxon>Bacilli</taxon>
        <taxon>Lactobacillales</taxon>
        <taxon>Lactobacillaceae</taxon>
        <taxon>Limosilactobacillus</taxon>
    </lineage>
</organism>
<keyword id="KW-1185">Reference proteome</keyword>
<keyword id="KW-0687">Ribonucleoprotein</keyword>
<keyword id="KW-0689">Ribosomal protein</keyword>
<name>RL34_LIMF3</name>
<accession>B2GEU7</accession>
<evidence type="ECO:0000255" key="1">
    <source>
        <dbReference type="HAMAP-Rule" id="MF_00391"/>
    </source>
</evidence>
<evidence type="ECO:0000256" key="2">
    <source>
        <dbReference type="SAM" id="MobiDB-lite"/>
    </source>
</evidence>
<evidence type="ECO:0000305" key="3"/>
<gene>
    <name evidence="1" type="primary">rpmH</name>
    <name type="ordered locus">LAF_1843</name>
</gene>
<reference key="1">
    <citation type="journal article" date="2008" name="DNA Res.">
        <title>Comparative genome analysis of Lactobacillus reuteri and Lactobacillus fermentum reveal a genomic island for reuterin and cobalamin production.</title>
        <authorList>
            <person name="Morita H."/>
            <person name="Toh H."/>
            <person name="Fukuda S."/>
            <person name="Horikawa H."/>
            <person name="Oshima K."/>
            <person name="Suzuki T."/>
            <person name="Murakami M."/>
            <person name="Hisamatsu S."/>
            <person name="Kato Y."/>
            <person name="Takizawa T."/>
            <person name="Fukuoka H."/>
            <person name="Yoshimura T."/>
            <person name="Itoh K."/>
            <person name="O'Sullivan D.J."/>
            <person name="McKay L.L."/>
            <person name="Ohno H."/>
            <person name="Kikuchi J."/>
            <person name="Masaoka T."/>
            <person name="Hattori M."/>
        </authorList>
    </citation>
    <scope>NUCLEOTIDE SEQUENCE [LARGE SCALE GENOMIC DNA]</scope>
    <source>
        <strain>NBRC 3956 / LMG 18251</strain>
    </source>
</reference>
<comment type="similarity">
    <text evidence="1">Belongs to the bacterial ribosomal protein bL34 family.</text>
</comment>
<dbReference type="EMBL" id="AP008937">
    <property type="protein sequence ID" value="BAG28179.1"/>
    <property type="molecule type" value="Genomic_DNA"/>
</dbReference>
<dbReference type="RefSeq" id="WP_003682291.1">
    <property type="nucleotide sequence ID" value="NC_010610.1"/>
</dbReference>
<dbReference type="SMR" id="B2GEU7"/>
<dbReference type="GeneID" id="83715707"/>
<dbReference type="KEGG" id="lfe:LAF_1843"/>
<dbReference type="eggNOG" id="COG0230">
    <property type="taxonomic scope" value="Bacteria"/>
</dbReference>
<dbReference type="HOGENOM" id="CLU_129938_2_0_9"/>
<dbReference type="Proteomes" id="UP000001697">
    <property type="component" value="Chromosome"/>
</dbReference>
<dbReference type="GO" id="GO:1990904">
    <property type="term" value="C:ribonucleoprotein complex"/>
    <property type="evidence" value="ECO:0007669"/>
    <property type="project" value="UniProtKB-KW"/>
</dbReference>
<dbReference type="GO" id="GO:0005840">
    <property type="term" value="C:ribosome"/>
    <property type="evidence" value="ECO:0007669"/>
    <property type="project" value="UniProtKB-KW"/>
</dbReference>
<dbReference type="GO" id="GO:0003735">
    <property type="term" value="F:structural constituent of ribosome"/>
    <property type="evidence" value="ECO:0007669"/>
    <property type="project" value="InterPro"/>
</dbReference>
<dbReference type="GO" id="GO:0006412">
    <property type="term" value="P:translation"/>
    <property type="evidence" value="ECO:0007669"/>
    <property type="project" value="UniProtKB-UniRule"/>
</dbReference>
<dbReference type="FunFam" id="1.10.287.3980:FF:000001">
    <property type="entry name" value="Mitochondrial ribosomal protein L34"/>
    <property type="match status" value="1"/>
</dbReference>
<dbReference type="Gene3D" id="1.10.287.3980">
    <property type="match status" value="1"/>
</dbReference>
<dbReference type="HAMAP" id="MF_00391">
    <property type="entry name" value="Ribosomal_bL34"/>
    <property type="match status" value="1"/>
</dbReference>
<dbReference type="InterPro" id="IPR000271">
    <property type="entry name" value="Ribosomal_bL34"/>
</dbReference>
<dbReference type="InterPro" id="IPR020939">
    <property type="entry name" value="Ribosomal_bL34_CS"/>
</dbReference>
<dbReference type="NCBIfam" id="TIGR01030">
    <property type="entry name" value="rpmH_bact"/>
    <property type="match status" value="1"/>
</dbReference>
<dbReference type="PANTHER" id="PTHR14503:SF4">
    <property type="entry name" value="LARGE RIBOSOMAL SUBUNIT PROTEIN BL34M"/>
    <property type="match status" value="1"/>
</dbReference>
<dbReference type="PANTHER" id="PTHR14503">
    <property type="entry name" value="MITOCHONDRIAL RIBOSOMAL PROTEIN 34 FAMILY MEMBER"/>
    <property type="match status" value="1"/>
</dbReference>
<dbReference type="Pfam" id="PF00468">
    <property type="entry name" value="Ribosomal_L34"/>
    <property type="match status" value="1"/>
</dbReference>
<dbReference type="PROSITE" id="PS00784">
    <property type="entry name" value="RIBOSOMAL_L34"/>
    <property type="match status" value="1"/>
</dbReference>
<feature type="chain" id="PRO_1000196061" description="Large ribosomal subunit protein bL34">
    <location>
        <begin position="1"/>
        <end position="44"/>
    </location>
</feature>
<feature type="region of interest" description="Disordered" evidence="2">
    <location>
        <begin position="21"/>
        <end position="44"/>
    </location>
</feature>
<feature type="compositionally biased region" description="Basic residues" evidence="2">
    <location>
        <begin position="30"/>
        <end position="44"/>
    </location>
</feature>
<protein>
    <recommendedName>
        <fullName evidence="1">Large ribosomal subunit protein bL34</fullName>
    </recommendedName>
    <alternativeName>
        <fullName evidence="3">50S ribosomal protein L34</fullName>
    </alternativeName>
</protein>
<proteinExistence type="inferred from homology"/>
<sequence>MKRTFQPKKRHRARVHGFRARMSTSNGRKVLARRRQKGRKALSA</sequence>